<protein>
    <recommendedName>
        <fullName>HTH-type transcriptional regulator MalR</fullName>
    </recommendedName>
    <alternativeName>
        <fullName>Maltose operon transcriptional repressor</fullName>
    </alternativeName>
</protein>
<feature type="initiator methionine" description="Removed" evidence="1">
    <location>
        <position position="1"/>
    </location>
</feature>
<feature type="chain" id="PRO_0000107971" description="HTH-type transcriptional regulator MalR">
    <location>
        <begin position="2"/>
        <end position="328"/>
    </location>
</feature>
<feature type="domain" description="HTH lacI-type" evidence="3">
    <location>
        <begin position="2"/>
        <end position="57"/>
    </location>
</feature>
<feature type="DNA-binding region" description="H-T-H motif" evidence="3">
    <location>
        <begin position="5"/>
        <end position="24"/>
    </location>
</feature>
<feature type="region of interest" description="Inducer binding" evidence="2">
    <location>
        <begin position="173"/>
        <end position="218"/>
    </location>
</feature>
<feature type="region of interest" description="Dimerization" evidence="2">
    <location>
        <begin position="282"/>
        <end position="291"/>
    </location>
</feature>
<organism>
    <name type="scientific">Streptococcus pneumoniae serotype 4 (strain ATCC BAA-334 / TIGR4)</name>
    <dbReference type="NCBI Taxonomy" id="170187"/>
    <lineage>
        <taxon>Bacteria</taxon>
        <taxon>Bacillati</taxon>
        <taxon>Bacillota</taxon>
        <taxon>Bacilli</taxon>
        <taxon>Lactobacillales</taxon>
        <taxon>Streptococcaceae</taxon>
        <taxon>Streptococcus</taxon>
    </lineage>
</organism>
<sequence length="328" mass="37044">MPVTIKDVAKAAGVSPSTVTRVIQNKSTISDETKKRVRKAMKELNYHPNLNARSLVSSYTQVIGLVLPDDSDAFYQNPFFPSVLRGISQVASENHYAIQIATGKDEKERLNAISQMVYGKRVDGLIFLYAQEEDPLVKLVAEEQFPFLILGKSLSPFIPLVDNDNVQAGFDATEYFIKKGCKRIAFIGGSKKLFVTKDRLTGYEQALKHYKLTTDNNRIYFADEFLEEKGYKFSKRLFKHDPQIDAIITTDSLLAEGVCNYIAKHQLDVPVLSFDSVNPKLNLAAYVDINSLELGRVSLETILQIINDNKNNKQICYRQLIAHKIIEK</sequence>
<accession>P0A4T1</accession>
<accession>Q08511</accession>
<proteinExistence type="evidence at protein level"/>
<name>MALR_STRPN</name>
<keyword id="KW-0238">DNA-binding</keyword>
<keyword id="KW-1185">Reference proteome</keyword>
<keyword id="KW-0678">Repressor</keyword>
<keyword id="KW-0804">Transcription</keyword>
<keyword id="KW-0805">Transcription regulation</keyword>
<gene>
    <name type="primary">malR</name>
    <name type="ordered locus">SP_2112</name>
</gene>
<evidence type="ECO:0000250" key="1"/>
<evidence type="ECO:0000255" key="2"/>
<evidence type="ECO:0000255" key="3">
    <source>
        <dbReference type="PROSITE-ProRule" id="PRU00111"/>
    </source>
</evidence>
<comment type="function">
    <text evidence="1">Transcriptional repressor of the maltosaccharide utilization operons malxCD and malMP.</text>
</comment>
<comment type="interaction">
    <interactant intactId="EBI-2207435">
        <id>P0A4T1</id>
    </interactant>
    <interactant intactId="EBI-2207079">
        <id>P95830</id>
        <label>dnaJ</label>
    </interactant>
    <organismsDiffer>false</organismsDiffer>
    <experiments>2</experiments>
</comment>
<comment type="interaction">
    <interactant intactId="EBI-2207435">
        <id>P0A4T1</id>
    </interactant>
    <interactant intactId="EBI-2207053">
        <id>Q97SE5</id>
        <label>gatC</label>
    </interactant>
    <organismsDiffer>false</organismsDiffer>
    <experiments>2</experiments>
</comment>
<comment type="interaction">
    <interactant intactId="EBI-2207435">
        <id>P0A4T1</id>
    </interactant>
    <interactant intactId="EBI-2206949">
        <id>Q97NV3</id>
        <label>groES</label>
    </interactant>
    <organismsDiffer>false</organismsDiffer>
    <experiments>2</experiments>
</comment>
<comment type="interaction">
    <interactant intactId="EBI-2207435">
        <id>P0A4T1</id>
    </interactant>
    <interactant intactId="EBI-2206997">
        <id>P05382</id>
        <label>sulA</label>
    </interactant>
    <organismsDiffer>false</organismsDiffer>
    <experiments>2</experiments>
</comment>
<comment type="interaction">
    <interactant intactId="EBI-2207435">
        <id>P0A4T1</id>
    </interactant>
    <interactant intactId="EBI-2206983">
        <id>Q97SR4</id>
        <label>uppS</label>
    </interactant>
    <organismsDiffer>false</organismsDiffer>
    <experiments>2</experiments>
</comment>
<comment type="interaction">
    <interactant intactId="EBI-2207435">
        <id>P0A4T1</id>
    </interactant>
    <interactant intactId="EBI-2207218">
        <id>Q97QP2</id>
        <label>xerS</label>
    </interactant>
    <organismsDiffer>false</organismsDiffer>
    <experiments>2</experiments>
</comment>
<reference key="1">
    <citation type="journal article" date="2001" name="Science">
        <title>Complete genome sequence of a virulent isolate of Streptococcus pneumoniae.</title>
        <authorList>
            <person name="Tettelin H."/>
            <person name="Nelson K.E."/>
            <person name="Paulsen I.T."/>
            <person name="Eisen J.A."/>
            <person name="Read T.D."/>
            <person name="Peterson S.N."/>
            <person name="Heidelberg J.F."/>
            <person name="DeBoy R.T."/>
            <person name="Haft D.H."/>
            <person name="Dodson R.J."/>
            <person name="Durkin A.S."/>
            <person name="Gwinn M.L."/>
            <person name="Kolonay J.F."/>
            <person name="Nelson W.C."/>
            <person name="Peterson J.D."/>
            <person name="Umayam L.A."/>
            <person name="White O."/>
            <person name="Salzberg S.L."/>
            <person name="Lewis M.R."/>
            <person name="Radune D."/>
            <person name="Holtzapple E.K."/>
            <person name="Khouri H.M."/>
            <person name="Wolf A.M."/>
            <person name="Utterback T.R."/>
            <person name="Hansen C.L."/>
            <person name="McDonald L.A."/>
            <person name="Feldblyum T.V."/>
            <person name="Angiuoli S.V."/>
            <person name="Dickinson T."/>
            <person name="Hickey E.K."/>
            <person name="Holt I.E."/>
            <person name="Loftus B.J."/>
            <person name="Yang F."/>
            <person name="Smith H.O."/>
            <person name="Venter J.C."/>
            <person name="Dougherty B.A."/>
            <person name="Morrison D.A."/>
            <person name="Hollingshead S.K."/>
            <person name="Fraser C.M."/>
        </authorList>
    </citation>
    <scope>NUCLEOTIDE SEQUENCE [LARGE SCALE GENOMIC DNA]</scope>
    <source>
        <strain>ATCC BAA-334 / TIGR4</strain>
    </source>
</reference>
<dbReference type="EMBL" id="AE005672">
    <property type="protein sequence ID" value="AAK76171.1"/>
    <property type="molecule type" value="Genomic_DNA"/>
</dbReference>
<dbReference type="PIR" id="B49543">
    <property type="entry name" value="B49543"/>
</dbReference>
<dbReference type="PIR" id="B95247">
    <property type="entry name" value="B95247"/>
</dbReference>
<dbReference type="RefSeq" id="WP_001145439.1">
    <property type="nucleotide sequence ID" value="NZ_CP155539.1"/>
</dbReference>
<dbReference type="SMR" id="P0A4T1"/>
<dbReference type="IntAct" id="P0A4T1">
    <property type="interactions" value="6"/>
</dbReference>
<dbReference type="PaxDb" id="170187-SP_2112"/>
<dbReference type="EnsemblBacteria" id="AAK76171">
    <property type="protein sequence ID" value="AAK76171"/>
    <property type="gene ID" value="SP_2112"/>
</dbReference>
<dbReference type="KEGG" id="spn:SP_2112"/>
<dbReference type="eggNOG" id="COG1609">
    <property type="taxonomic scope" value="Bacteria"/>
</dbReference>
<dbReference type="BioCyc" id="SPNE170187:G1FZB-2200-MONOMER"/>
<dbReference type="Proteomes" id="UP000000585">
    <property type="component" value="Chromosome"/>
</dbReference>
<dbReference type="GO" id="GO:0003700">
    <property type="term" value="F:DNA-binding transcription factor activity"/>
    <property type="evidence" value="ECO:0007669"/>
    <property type="project" value="TreeGrafter"/>
</dbReference>
<dbReference type="GO" id="GO:0000976">
    <property type="term" value="F:transcription cis-regulatory region binding"/>
    <property type="evidence" value="ECO:0007669"/>
    <property type="project" value="TreeGrafter"/>
</dbReference>
<dbReference type="CDD" id="cd01392">
    <property type="entry name" value="HTH_LacI"/>
    <property type="match status" value="1"/>
</dbReference>
<dbReference type="CDD" id="cd06294">
    <property type="entry name" value="PBP1_MalR-like"/>
    <property type="match status" value="1"/>
</dbReference>
<dbReference type="Gene3D" id="3.40.50.2300">
    <property type="match status" value="2"/>
</dbReference>
<dbReference type="Gene3D" id="1.10.260.40">
    <property type="entry name" value="lambda repressor-like DNA-binding domains"/>
    <property type="match status" value="1"/>
</dbReference>
<dbReference type="InterPro" id="IPR001387">
    <property type="entry name" value="Cro/C1-type_HTH"/>
</dbReference>
<dbReference type="InterPro" id="IPR000843">
    <property type="entry name" value="HTH_LacI"/>
</dbReference>
<dbReference type="InterPro" id="IPR010982">
    <property type="entry name" value="Lambda_DNA-bd_dom_sf"/>
</dbReference>
<dbReference type="InterPro" id="IPR001761">
    <property type="entry name" value="Peripla_BP/Lac1_sug-bd_dom"/>
</dbReference>
<dbReference type="InterPro" id="IPR028082">
    <property type="entry name" value="Peripla_BP_I"/>
</dbReference>
<dbReference type="PANTHER" id="PTHR30146:SF109">
    <property type="entry name" value="HTH-TYPE TRANSCRIPTIONAL REGULATOR GALS"/>
    <property type="match status" value="1"/>
</dbReference>
<dbReference type="PANTHER" id="PTHR30146">
    <property type="entry name" value="LACI-RELATED TRANSCRIPTIONAL REPRESSOR"/>
    <property type="match status" value="1"/>
</dbReference>
<dbReference type="Pfam" id="PF00356">
    <property type="entry name" value="LacI"/>
    <property type="match status" value="1"/>
</dbReference>
<dbReference type="Pfam" id="PF00532">
    <property type="entry name" value="Peripla_BP_1"/>
    <property type="match status" value="1"/>
</dbReference>
<dbReference type="PRINTS" id="PR00036">
    <property type="entry name" value="HTHLACI"/>
</dbReference>
<dbReference type="SMART" id="SM00354">
    <property type="entry name" value="HTH_LACI"/>
    <property type="match status" value="1"/>
</dbReference>
<dbReference type="SUPFAM" id="SSF47413">
    <property type="entry name" value="lambda repressor-like DNA-binding domains"/>
    <property type="match status" value="1"/>
</dbReference>
<dbReference type="SUPFAM" id="SSF53822">
    <property type="entry name" value="Periplasmic binding protein-like I"/>
    <property type="match status" value="1"/>
</dbReference>
<dbReference type="PROSITE" id="PS00356">
    <property type="entry name" value="HTH_LACI_1"/>
    <property type="match status" value="1"/>
</dbReference>
<dbReference type="PROSITE" id="PS50932">
    <property type="entry name" value="HTH_LACI_2"/>
    <property type="match status" value="1"/>
</dbReference>